<proteinExistence type="inferred from homology"/>
<accession>B2G735</accession>
<protein>
    <recommendedName>
        <fullName evidence="1">Glycerol-3-phosphate acyltransferase</fullName>
    </recommendedName>
    <alternativeName>
        <fullName evidence="1">Acyl-PO4 G3P acyltransferase</fullName>
    </alternativeName>
    <alternativeName>
        <fullName evidence="1">Acyl-phosphate--glycerol-3-phosphate acyltransferase</fullName>
    </alternativeName>
    <alternativeName>
        <fullName evidence="1">G3P acyltransferase</fullName>
        <shortName evidence="1">GPAT</shortName>
        <ecNumber evidence="1">2.3.1.275</ecNumber>
    </alternativeName>
    <alternativeName>
        <fullName evidence="1">Lysophosphatidic acid synthase</fullName>
        <shortName evidence="1">LPA synthase</shortName>
    </alternativeName>
</protein>
<feature type="chain" id="PRO_1000136098" description="Glycerol-3-phosphate acyltransferase">
    <location>
        <begin position="1"/>
        <end position="209"/>
    </location>
</feature>
<feature type="transmembrane region" description="Helical" evidence="1">
    <location>
        <begin position="5"/>
        <end position="25"/>
    </location>
</feature>
<feature type="transmembrane region" description="Helical" evidence="1">
    <location>
        <begin position="50"/>
        <end position="70"/>
    </location>
</feature>
<feature type="transmembrane region" description="Helical" evidence="1">
    <location>
        <begin position="74"/>
        <end position="94"/>
    </location>
</feature>
<feature type="transmembrane region" description="Helical" evidence="1">
    <location>
        <begin position="115"/>
        <end position="135"/>
    </location>
</feature>
<feature type="transmembrane region" description="Helical" evidence="1">
    <location>
        <begin position="151"/>
        <end position="171"/>
    </location>
</feature>
<evidence type="ECO:0000255" key="1">
    <source>
        <dbReference type="HAMAP-Rule" id="MF_01043"/>
    </source>
</evidence>
<organism>
    <name type="scientific">Limosilactobacillus reuteri subsp. reuteri (strain JCM 1112)</name>
    <name type="common">Lactobacillus reuteri</name>
    <dbReference type="NCBI Taxonomy" id="557433"/>
    <lineage>
        <taxon>Bacteria</taxon>
        <taxon>Bacillati</taxon>
        <taxon>Bacillota</taxon>
        <taxon>Bacilli</taxon>
        <taxon>Lactobacillales</taxon>
        <taxon>Lactobacillaceae</taxon>
        <taxon>Limosilactobacillus</taxon>
    </lineage>
</organism>
<gene>
    <name evidence="1" type="primary">plsY</name>
    <name type="ordered locus">LAR_0751</name>
</gene>
<comment type="function">
    <text evidence="1">Catalyzes the transfer of an acyl group from acyl-phosphate (acyl-PO(4)) to glycerol-3-phosphate (G3P) to form lysophosphatidic acid (LPA). This enzyme utilizes acyl-phosphate as fatty acyl donor, but not acyl-CoA or acyl-ACP.</text>
</comment>
<comment type="catalytic activity">
    <reaction evidence="1">
        <text>an acyl phosphate + sn-glycerol 3-phosphate = a 1-acyl-sn-glycero-3-phosphate + phosphate</text>
        <dbReference type="Rhea" id="RHEA:34075"/>
        <dbReference type="ChEBI" id="CHEBI:43474"/>
        <dbReference type="ChEBI" id="CHEBI:57597"/>
        <dbReference type="ChEBI" id="CHEBI:57970"/>
        <dbReference type="ChEBI" id="CHEBI:59918"/>
        <dbReference type="EC" id="2.3.1.275"/>
    </reaction>
</comment>
<comment type="pathway">
    <text evidence="1">Lipid metabolism; phospholipid metabolism.</text>
</comment>
<comment type="subunit">
    <text evidence="1">Probably interacts with PlsX.</text>
</comment>
<comment type="subcellular location">
    <subcellularLocation>
        <location evidence="1">Cell membrane</location>
        <topology evidence="1">Multi-pass membrane protein</topology>
    </subcellularLocation>
</comment>
<comment type="similarity">
    <text evidence="1">Belongs to the PlsY family.</text>
</comment>
<reference key="1">
    <citation type="journal article" date="2008" name="DNA Res.">
        <title>Comparative genome analysis of Lactobacillus reuteri and Lactobacillus fermentum reveal a genomic island for reuterin and cobalamin production.</title>
        <authorList>
            <person name="Morita H."/>
            <person name="Toh H."/>
            <person name="Fukuda S."/>
            <person name="Horikawa H."/>
            <person name="Oshima K."/>
            <person name="Suzuki T."/>
            <person name="Murakami M."/>
            <person name="Hisamatsu S."/>
            <person name="Kato Y."/>
            <person name="Takizawa T."/>
            <person name="Fukuoka H."/>
            <person name="Yoshimura T."/>
            <person name="Itoh K."/>
            <person name="O'Sullivan D.J."/>
            <person name="McKay L.L."/>
            <person name="Ohno H."/>
            <person name="Kikuchi J."/>
            <person name="Masaoka T."/>
            <person name="Hattori M."/>
        </authorList>
    </citation>
    <scope>NUCLEOTIDE SEQUENCE [LARGE SCALE GENOMIC DNA]</scope>
    <source>
        <strain>JCM 1112</strain>
    </source>
</reference>
<dbReference type="EC" id="2.3.1.275" evidence="1"/>
<dbReference type="EMBL" id="AP007281">
    <property type="protein sequence ID" value="BAG25267.1"/>
    <property type="molecule type" value="Genomic_DNA"/>
</dbReference>
<dbReference type="RefSeq" id="WP_003666074.1">
    <property type="nucleotide sequence ID" value="NC_010609.1"/>
</dbReference>
<dbReference type="SMR" id="B2G735"/>
<dbReference type="GeneID" id="77191094"/>
<dbReference type="KEGG" id="lrf:LAR_0751"/>
<dbReference type="HOGENOM" id="CLU_081254_4_0_9"/>
<dbReference type="UniPathway" id="UPA00085"/>
<dbReference type="GO" id="GO:0005886">
    <property type="term" value="C:plasma membrane"/>
    <property type="evidence" value="ECO:0007669"/>
    <property type="project" value="UniProtKB-SubCell"/>
</dbReference>
<dbReference type="GO" id="GO:0043772">
    <property type="term" value="F:acyl-phosphate glycerol-3-phosphate acyltransferase activity"/>
    <property type="evidence" value="ECO:0007669"/>
    <property type="project" value="UniProtKB-UniRule"/>
</dbReference>
<dbReference type="GO" id="GO:0008654">
    <property type="term" value="P:phospholipid biosynthetic process"/>
    <property type="evidence" value="ECO:0007669"/>
    <property type="project" value="UniProtKB-UniRule"/>
</dbReference>
<dbReference type="HAMAP" id="MF_01043">
    <property type="entry name" value="PlsY"/>
    <property type="match status" value="1"/>
</dbReference>
<dbReference type="InterPro" id="IPR003811">
    <property type="entry name" value="G3P_acylTferase_PlsY"/>
</dbReference>
<dbReference type="NCBIfam" id="TIGR00023">
    <property type="entry name" value="glycerol-3-phosphate 1-O-acyltransferase PlsY"/>
    <property type="match status" value="1"/>
</dbReference>
<dbReference type="PANTHER" id="PTHR30309:SF0">
    <property type="entry name" value="GLYCEROL-3-PHOSPHATE ACYLTRANSFERASE-RELATED"/>
    <property type="match status" value="1"/>
</dbReference>
<dbReference type="PANTHER" id="PTHR30309">
    <property type="entry name" value="INNER MEMBRANE PROTEIN YGIH"/>
    <property type="match status" value="1"/>
</dbReference>
<dbReference type="Pfam" id="PF02660">
    <property type="entry name" value="G3P_acyltransf"/>
    <property type="match status" value="1"/>
</dbReference>
<dbReference type="SMART" id="SM01207">
    <property type="entry name" value="G3P_acyltransf"/>
    <property type="match status" value="1"/>
</dbReference>
<sequence length="209" mass="22667">MFFEIIGMIIIAYLLGSIPTGLWIGKYIYHKDIRKLGSGNIGTTNTFRTLGFKAGVVVLFIDILKGTLAASQPYFLGISGTVNPLLIGLFASLGHTVSIFDNFHGGKAVATSAGILLAYNPLLFVVACLIFIFVLCLTSMVSAASMVGISAIFIIALFIHAWILAIVAGILTGVVFYRHRSNIHRILSGKESMVSFGLGYYLREKKQNK</sequence>
<name>PLSY_LIMRJ</name>
<keyword id="KW-1003">Cell membrane</keyword>
<keyword id="KW-0444">Lipid biosynthesis</keyword>
<keyword id="KW-0443">Lipid metabolism</keyword>
<keyword id="KW-0472">Membrane</keyword>
<keyword id="KW-0594">Phospholipid biosynthesis</keyword>
<keyword id="KW-1208">Phospholipid metabolism</keyword>
<keyword id="KW-0808">Transferase</keyword>
<keyword id="KW-0812">Transmembrane</keyword>
<keyword id="KW-1133">Transmembrane helix</keyword>